<comment type="function">
    <text evidence="1">Component of the dark-operative protochlorophyllide reductase (DPOR) that uses Mg-ATP and reduced ferredoxin to reduce ring D of protochlorophyllide (Pchlide) to form chlorophyllide a (Chlide). This reaction is light-independent. The L component serves as a unique electron donor to the NB-component of the complex, and binds Mg-ATP.</text>
</comment>
<comment type="catalytic activity">
    <reaction evidence="1">
        <text>chlorophyllide a + oxidized 2[4Fe-4S]-[ferredoxin] + 2 ADP + 2 phosphate = protochlorophyllide a + reduced 2[4Fe-4S]-[ferredoxin] + 2 ATP + 2 H2O</text>
        <dbReference type="Rhea" id="RHEA:28202"/>
        <dbReference type="Rhea" id="RHEA-COMP:10002"/>
        <dbReference type="Rhea" id="RHEA-COMP:10004"/>
        <dbReference type="ChEBI" id="CHEBI:15377"/>
        <dbReference type="ChEBI" id="CHEBI:30616"/>
        <dbReference type="ChEBI" id="CHEBI:33722"/>
        <dbReference type="ChEBI" id="CHEBI:33723"/>
        <dbReference type="ChEBI" id="CHEBI:43474"/>
        <dbReference type="ChEBI" id="CHEBI:83348"/>
        <dbReference type="ChEBI" id="CHEBI:83350"/>
        <dbReference type="ChEBI" id="CHEBI:456216"/>
        <dbReference type="EC" id="1.3.7.7"/>
    </reaction>
</comment>
<comment type="cofactor">
    <cofactor evidence="1">
        <name>[4Fe-4S] cluster</name>
        <dbReference type="ChEBI" id="CHEBI:49883"/>
    </cofactor>
    <text evidence="1">Binds 1 [4Fe-4S] cluster per dimer.</text>
</comment>
<comment type="pathway">
    <text evidence="1">Porphyrin-containing compound metabolism; chlorophyll biosynthesis (light-independent).</text>
</comment>
<comment type="subunit">
    <text evidence="1">Homodimer. Protochlorophyllide reductase is composed of three subunits; ChlL, ChlN and ChlB.</text>
</comment>
<comment type="subcellular location">
    <subcellularLocation>
        <location>Plastid</location>
        <location>Chloroplast</location>
    </subcellularLocation>
</comment>
<comment type="similarity">
    <text evidence="1">Belongs to the NifH/BchL/ChlL family.</text>
</comment>
<proteinExistence type="inferred from homology"/>
<protein>
    <recommendedName>
        <fullName evidence="1">Light-independent protochlorophyllide reductase iron-sulfur ATP-binding protein</fullName>
        <shortName evidence="1">DPOR subunit L</shortName>
        <shortName evidence="1">LI-POR subunit L</shortName>
        <ecNumber evidence="1">1.3.7.7</ecNumber>
    </recommendedName>
</protein>
<reference key="1">
    <citation type="journal article" date="2006" name="Mol. Biol. Evol.">
        <title>The chloroplast genome sequence of Chara vulgaris sheds new light into the closest green algal relatives of land plants.</title>
        <authorList>
            <person name="Turmel M."/>
            <person name="Otis C."/>
            <person name="Lemieux C."/>
        </authorList>
    </citation>
    <scope>NUCLEOTIDE SEQUENCE [LARGE SCALE GENOMIC DNA]</scope>
</reference>
<geneLocation type="chloroplast"/>
<gene>
    <name evidence="1" type="primary">chlL</name>
</gene>
<name>CHLL_CHAVU</name>
<keyword id="KW-0004">4Fe-4S</keyword>
<keyword id="KW-0067">ATP-binding</keyword>
<keyword id="KW-0149">Chlorophyll biosynthesis</keyword>
<keyword id="KW-0150">Chloroplast</keyword>
<keyword id="KW-0408">Iron</keyword>
<keyword id="KW-0411">Iron-sulfur</keyword>
<keyword id="KW-0460">Magnesium</keyword>
<keyword id="KW-0479">Metal-binding</keyword>
<keyword id="KW-0547">Nucleotide-binding</keyword>
<keyword id="KW-0560">Oxidoreductase</keyword>
<keyword id="KW-0602">Photosynthesis</keyword>
<keyword id="KW-0934">Plastid</keyword>
<organism>
    <name type="scientific">Chara vulgaris</name>
    <name type="common">Common stonewort</name>
    <dbReference type="NCBI Taxonomy" id="55564"/>
    <lineage>
        <taxon>Eukaryota</taxon>
        <taxon>Viridiplantae</taxon>
        <taxon>Streptophyta</taxon>
        <taxon>Charophyceae</taxon>
        <taxon>Charales</taxon>
        <taxon>Characeae</taxon>
        <taxon>Chara</taxon>
    </lineage>
</organism>
<dbReference type="EC" id="1.3.7.7" evidence="1"/>
<dbReference type="EMBL" id="DQ229107">
    <property type="protein sequence ID" value="ABA61905.1"/>
    <property type="molecule type" value="Genomic_DNA"/>
</dbReference>
<dbReference type="RefSeq" id="YP_635807.1">
    <property type="nucleotide sequence ID" value="NC_008097.1"/>
</dbReference>
<dbReference type="SMR" id="Q1ACE0"/>
<dbReference type="GeneID" id="4100275"/>
<dbReference type="UniPathway" id="UPA00670"/>
<dbReference type="GO" id="GO:0009507">
    <property type="term" value="C:chloroplast"/>
    <property type="evidence" value="ECO:0007669"/>
    <property type="project" value="UniProtKB-SubCell"/>
</dbReference>
<dbReference type="GO" id="GO:0051539">
    <property type="term" value="F:4 iron, 4 sulfur cluster binding"/>
    <property type="evidence" value="ECO:0007669"/>
    <property type="project" value="UniProtKB-UniRule"/>
</dbReference>
<dbReference type="GO" id="GO:0005524">
    <property type="term" value="F:ATP binding"/>
    <property type="evidence" value="ECO:0007669"/>
    <property type="project" value="UniProtKB-UniRule"/>
</dbReference>
<dbReference type="GO" id="GO:0046872">
    <property type="term" value="F:metal ion binding"/>
    <property type="evidence" value="ECO:0007669"/>
    <property type="project" value="UniProtKB-KW"/>
</dbReference>
<dbReference type="GO" id="GO:0016730">
    <property type="term" value="F:oxidoreductase activity, acting on iron-sulfur proteins as donors"/>
    <property type="evidence" value="ECO:0007669"/>
    <property type="project" value="InterPro"/>
</dbReference>
<dbReference type="GO" id="GO:0016636">
    <property type="term" value="F:oxidoreductase activity, acting on the CH-CH group of donors, iron-sulfur protein as acceptor"/>
    <property type="evidence" value="ECO:0007669"/>
    <property type="project" value="UniProtKB-UniRule"/>
</dbReference>
<dbReference type="GO" id="GO:0036068">
    <property type="term" value="P:light-independent chlorophyll biosynthetic process"/>
    <property type="evidence" value="ECO:0007669"/>
    <property type="project" value="UniProtKB-UniRule"/>
</dbReference>
<dbReference type="GO" id="GO:0019685">
    <property type="term" value="P:photosynthesis, dark reaction"/>
    <property type="evidence" value="ECO:0007669"/>
    <property type="project" value="InterPro"/>
</dbReference>
<dbReference type="CDD" id="cd02032">
    <property type="entry name" value="Bchl-like"/>
    <property type="match status" value="1"/>
</dbReference>
<dbReference type="Gene3D" id="3.40.50.300">
    <property type="entry name" value="P-loop containing nucleotide triphosphate hydrolases"/>
    <property type="match status" value="1"/>
</dbReference>
<dbReference type="HAMAP" id="MF_00355">
    <property type="entry name" value="ChlL_BchL"/>
    <property type="match status" value="1"/>
</dbReference>
<dbReference type="InterPro" id="IPR030655">
    <property type="entry name" value="NifH/chlL_CS"/>
</dbReference>
<dbReference type="InterPro" id="IPR000392">
    <property type="entry name" value="NifH/frxC"/>
</dbReference>
<dbReference type="InterPro" id="IPR027417">
    <property type="entry name" value="P-loop_NTPase"/>
</dbReference>
<dbReference type="InterPro" id="IPR005971">
    <property type="entry name" value="Protochlorophyllide_ATP-bd"/>
</dbReference>
<dbReference type="NCBIfam" id="TIGR01281">
    <property type="entry name" value="DPOR_bchL"/>
    <property type="match status" value="1"/>
</dbReference>
<dbReference type="PANTHER" id="PTHR42864">
    <property type="entry name" value="LIGHT-INDEPENDENT PROTOCHLOROPHYLLIDE REDUCTASE IRON-SULFUR ATP-BINDING PROTEIN"/>
    <property type="match status" value="1"/>
</dbReference>
<dbReference type="PANTHER" id="PTHR42864:SF2">
    <property type="entry name" value="LIGHT-INDEPENDENT PROTOCHLOROPHYLLIDE REDUCTASE IRON-SULFUR ATP-BINDING PROTEIN"/>
    <property type="match status" value="1"/>
</dbReference>
<dbReference type="Pfam" id="PF00142">
    <property type="entry name" value="Fer4_NifH"/>
    <property type="match status" value="1"/>
</dbReference>
<dbReference type="PIRSF" id="PIRSF000363">
    <property type="entry name" value="Nitrogenase_iron"/>
    <property type="match status" value="1"/>
</dbReference>
<dbReference type="PRINTS" id="PR00091">
    <property type="entry name" value="NITROGNASEII"/>
</dbReference>
<dbReference type="SUPFAM" id="SSF52540">
    <property type="entry name" value="P-loop containing nucleoside triphosphate hydrolases"/>
    <property type="match status" value="1"/>
</dbReference>
<dbReference type="PROSITE" id="PS00746">
    <property type="entry name" value="NIFH_FRXC_1"/>
    <property type="match status" value="1"/>
</dbReference>
<dbReference type="PROSITE" id="PS00692">
    <property type="entry name" value="NIFH_FRXC_2"/>
    <property type="match status" value="1"/>
</dbReference>
<dbReference type="PROSITE" id="PS51026">
    <property type="entry name" value="NIFH_FRXC_3"/>
    <property type="match status" value="1"/>
</dbReference>
<sequence length="288" mass="31729">MKIAVYGKGGIGKSTTSCNISIALARRGKKVLQIGCDPKHDSTFTLTGFLIPTIIDTLQSKDYHYEDVWPEDVIYKGYGEVNCVEAGGPPAGAGCGGYVVGETVKLLKELNAFYEYDVILFDVLGDVVCGGFAAPLNYADYCIIITDNGFDALFAANRIAASVREKARTHPLRLAGLVGNRTSKRDLIDKYVEACPMPVLEVLPLIEDIRVSRVKGKTLFEMAETDSSLEYVCDYYLNIADQILSQPEGIVPKEIPDRELFTLLSDFYLNININSNNLEKNESSFLII</sequence>
<evidence type="ECO:0000255" key="1">
    <source>
        <dbReference type="HAMAP-Rule" id="MF_00355"/>
    </source>
</evidence>
<feature type="chain" id="PRO_0000275264" description="Light-independent protochlorophyllide reductase iron-sulfur ATP-binding protein">
    <location>
        <begin position="1"/>
        <end position="288"/>
    </location>
</feature>
<feature type="binding site" evidence="1">
    <location>
        <begin position="10"/>
        <end position="15"/>
    </location>
    <ligand>
        <name>ATP</name>
        <dbReference type="ChEBI" id="CHEBI:30616"/>
    </ligand>
</feature>
<feature type="binding site" evidence="1">
    <location>
        <position position="14"/>
    </location>
    <ligand>
        <name>Mg(2+)</name>
        <dbReference type="ChEBI" id="CHEBI:18420"/>
    </ligand>
</feature>
<feature type="binding site" evidence="1">
    <location>
        <position position="39"/>
    </location>
    <ligand>
        <name>ATP</name>
        <dbReference type="ChEBI" id="CHEBI:30616"/>
    </ligand>
</feature>
<feature type="binding site" evidence="1">
    <location>
        <position position="95"/>
    </location>
    <ligand>
        <name>[4Fe-4S] cluster</name>
        <dbReference type="ChEBI" id="CHEBI:49883"/>
        <note>ligand shared between dimeric partners</note>
    </ligand>
</feature>
<feature type="binding site" evidence="1">
    <location>
        <position position="129"/>
    </location>
    <ligand>
        <name>[4Fe-4S] cluster</name>
        <dbReference type="ChEBI" id="CHEBI:49883"/>
        <note>ligand shared between dimeric partners</note>
    </ligand>
</feature>
<feature type="binding site" evidence="1">
    <location>
        <begin position="180"/>
        <end position="181"/>
    </location>
    <ligand>
        <name>ATP</name>
        <dbReference type="ChEBI" id="CHEBI:30616"/>
    </ligand>
</feature>
<accession>Q1ACE0</accession>